<name>RNPH_MARN8</name>
<organism>
    <name type="scientific">Marinobacter nauticus (strain ATCC 700491 / DSM 11845 / VT8)</name>
    <name type="common">Marinobacter aquaeolei</name>
    <dbReference type="NCBI Taxonomy" id="351348"/>
    <lineage>
        <taxon>Bacteria</taxon>
        <taxon>Pseudomonadati</taxon>
        <taxon>Pseudomonadota</taxon>
        <taxon>Gammaproteobacteria</taxon>
        <taxon>Pseudomonadales</taxon>
        <taxon>Marinobacteraceae</taxon>
        <taxon>Marinobacter</taxon>
    </lineage>
</organism>
<gene>
    <name evidence="1" type="primary">rph</name>
    <name type="ordered locus">Maqu_0548</name>
</gene>
<dbReference type="EC" id="2.7.7.56" evidence="1"/>
<dbReference type="EMBL" id="CP000514">
    <property type="protein sequence ID" value="ABM17649.1"/>
    <property type="molecule type" value="Genomic_DNA"/>
</dbReference>
<dbReference type="RefSeq" id="WP_011784093.1">
    <property type="nucleotide sequence ID" value="NC_008740.1"/>
</dbReference>
<dbReference type="SMR" id="A1TY30"/>
<dbReference type="STRING" id="351348.Maqu_0548"/>
<dbReference type="GeneID" id="31819987"/>
<dbReference type="KEGG" id="maq:Maqu_0548"/>
<dbReference type="eggNOG" id="COG0689">
    <property type="taxonomic scope" value="Bacteria"/>
</dbReference>
<dbReference type="HOGENOM" id="CLU_050858_0_0_6"/>
<dbReference type="OrthoDB" id="9802265at2"/>
<dbReference type="Proteomes" id="UP000000998">
    <property type="component" value="Chromosome"/>
</dbReference>
<dbReference type="GO" id="GO:0000175">
    <property type="term" value="F:3'-5'-RNA exonuclease activity"/>
    <property type="evidence" value="ECO:0007669"/>
    <property type="project" value="UniProtKB-UniRule"/>
</dbReference>
<dbReference type="GO" id="GO:0000049">
    <property type="term" value="F:tRNA binding"/>
    <property type="evidence" value="ECO:0007669"/>
    <property type="project" value="UniProtKB-UniRule"/>
</dbReference>
<dbReference type="GO" id="GO:0009022">
    <property type="term" value="F:tRNA nucleotidyltransferase activity"/>
    <property type="evidence" value="ECO:0007669"/>
    <property type="project" value="UniProtKB-UniRule"/>
</dbReference>
<dbReference type="GO" id="GO:0016075">
    <property type="term" value="P:rRNA catabolic process"/>
    <property type="evidence" value="ECO:0007669"/>
    <property type="project" value="UniProtKB-UniRule"/>
</dbReference>
<dbReference type="GO" id="GO:0006364">
    <property type="term" value="P:rRNA processing"/>
    <property type="evidence" value="ECO:0007669"/>
    <property type="project" value="UniProtKB-KW"/>
</dbReference>
<dbReference type="GO" id="GO:0008033">
    <property type="term" value="P:tRNA processing"/>
    <property type="evidence" value="ECO:0007669"/>
    <property type="project" value="UniProtKB-UniRule"/>
</dbReference>
<dbReference type="CDD" id="cd11362">
    <property type="entry name" value="RNase_PH_bact"/>
    <property type="match status" value="1"/>
</dbReference>
<dbReference type="FunFam" id="3.30.230.70:FF:000003">
    <property type="entry name" value="Ribonuclease PH"/>
    <property type="match status" value="1"/>
</dbReference>
<dbReference type="Gene3D" id="3.30.230.70">
    <property type="entry name" value="GHMP Kinase, N-terminal domain"/>
    <property type="match status" value="1"/>
</dbReference>
<dbReference type="HAMAP" id="MF_00564">
    <property type="entry name" value="RNase_PH"/>
    <property type="match status" value="1"/>
</dbReference>
<dbReference type="InterPro" id="IPR001247">
    <property type="entry name" value="ExoRNase_PH_dom1"/>
</dbReference>
<dbReference type="InterPro" id="IPR015847">
    <property type="entry name" value="ExoRNase_PH_dom2"/>
</dbReference>
<dbReference type="InterPro" id="IPR036345">
    <property type="entry name" value="ExoRNase_PH_dom2_sf"/>
</dbReference>
<dbReference type="InterPro" id="IPR027408">
    <property type="entry name" value="PNPase/RNase_PH_dom_sf"/>
</dbReference>
<dbReference type="InterPro" id="IPR020568">
    <property type="entry name" value="Ribosomal_Su5_D2-typ_SF"/>
</dbReference>
<dbReference type="InterPro" id="IPR050080">
    <property type="entry name" value="RNase_PH"/>
</dbReference>
<dbReference type="InterPro" id="IPR002381">
    <property type="entry name" value="RNase_PH_bac-type"/>
</dbReference>
<dbReference type="InterPro" id="IPR018336">
    <property type="entry name" value="RNase_PH_CS"/>
</dbReference>
<dbReference type="NCBIfam" id="TIGR01966">
    <property type="entry name" value="RNasePH"/>
    <property type="match status" value="1"/>
</dbReference>
<dbReference type="PANTHER" id="PTHR11953">
    <property type="entry name" value="EXOSOME COMPLEX COMPONENT"/>
    <property type="match status" value="1"/>
</dbReference>
<dbReference type="PANTHER" id="PTHR11953:SF0">
    <property type="entry name" value="EXOSOME COMPLEX COMPONENT RRP41"/>
    <property type="match status" value="1"/>
</dbReference>
<dbReference type="Pfam" id="PF01138">
    <property type="entry name" value="RNase_PH"/>
    <property type="match status" value="1"/>
</dbReference>
<dbReference type="Pfam" id="PF03725">
    <property type="entry name" value="RNase_PH_C"/>
    <property type="match status" value="1"/>
</dbReference>
<dbReference type="SUPFAM" id="SSF55666">
    <property type="entry name" value="Ribonuclease PH domain 2-like"/>
    <property type="match status" value="1"/>
</dbReference>
<dbReference type="SUPFAM" id="SSF54211">
    <property type="entry name" value="Ribosomal protein S5 domain 2-like"/>
    <property type="match status" value="1"/>
</dbReference>
<dbReference type="PROSITE" id="PS01277">
    <property type="entry name" value="RIBONUCLEASE_PH"/>
    <property type="match status" value="1"/>
</dbReference>
<protein>
    <recommendedName>
        <fullName evidence="1">Ribonuclease PH</fullName>
        <shortName evidence="1">RNase PH</shortName>
        <ecNumber evidence="1">2.7.7.56</ecNumber>
    </recommendedName>
    <alternativeName>
        <fullName evidence="1">tRNA nucleotidyltransferase</fullName>
    </alternativeName>
</protein>
<accession>A1TY30</accession>
<feature type="chain" id="PRO_1000024823" description="Ribonuclease PH">
    <location>
        <begin position="1"/>
        <end position="238"/>
    </location>
</feature>
<feature type="binding site" evidence="1">
    <location>
        <position position="86"/>
    </location>
    <ligand>
        <name>phosphate</name>
        <dbReference type="ChEBI" id="CHEBI:43474"/>
        <note>substrate</note>
    </ligand>
</feature>
<feature type="binding site" evidence="1">
    <location>
        <begin position="124"/>
        <end position="126"/>
    </location>
    <ligand>
        <name>phosphate</name>
        <dbReference type="ChEBI" id="CHEBI:43474"/>
        <note>substrate</note>
    </ligand>
</feature>
<evidence type="ECO:0000255" key="1">
    <source>
        <dbReference type="HAMAP-Rule" id="MF_00564"/>
    </source>
</evidence>
<comment type="function">
    <text evidence="1">Phosphorolytic 3'-5' exoribonuclease that plays an important role in tRNA 3'-end maturation. Removes nucleotide residues following the 3'-CCA terminus of tRNAs; can also add nucleotides to the ends of RNA molecules by using nucleoside diphosphates as substrates, but this may not be physiologically important. Probably plays a role in initiation of 16S rRNA degradation (leading to ribosome degradation) during starvation.</text>
</comment>
<comment type="catalytic activity">
    <reaction evidence="1">
        <text>tRNA(n+1) + phosphate = tRNA(n) + a ribonucleoside 5'-diphosphate</text>
        <dbReference type="Rhea" id="RHEA:10628"/>
        <dbReference type="Rhea" id="RHEA-COMP:17343"/>
        <dbReference type="Rhea" id="RHEA-COMP:17344"/>
        <dbReference type="ChEBI" id="CHEBI:43474"/>
        <dbReference type="ChEBI" id="CHEBI:57930"/>
        <dbReference type="ChEBI" id="CHEBI:173114"/>
        <dbReference type="EC" id="2.7.7.56"/>
    </reaction>
</comment>
<comment type="subunit">
    <text evidence="1">Homohexameric ring arranged as a trimer of dimers.</text>
</comment>
<comment type="similarity">
    <text evidence="1">Belongs to the RNase PH family.</text>
</comment>
<keyword id="KW-0548">Nucleotidyltransferase</keyword>
<keyword id="KW-0694">RNA-binding</keyword>
<keyword id="KW-0698">rRNA processing</keyword>
<keyword id="KW-0808">Transferase</keyword>
<keyword id="KW-0819">tRNA processing</keyword>
<keyword id="KW-0820">tRNA-binding</keyword>
<sequence>MRPSGRTPEQPRDVRITRNYTRHAEGSVLVEFGDTKVICTASVENKVPPFLRGEGKGWITAEYGMLPRSTGSRMGREAARGKQGGRTVEIQRLIGRSLRAAVDLEALGEHTITIDCDVIQADGGTRTAAITGGCVALVDALNHLVKEKRLKKSPLKQMVAAVSVGVYRGTPVADLDYPEDSEAETDMNVIMTDQGGFIEIQGTAEGAPFEQAELDAMLALARKAIDQLFELQKEALSA</sequence>
<reference key="1">
    <citation type="journal article" date="2011" name="Appl. Environ. Microbiol.">
        <title>Genomic potential of Marinobacter aquaeolei, a biogeochemical 'opportunitroph'.</title>
        <authorList>
            <person name="Singer E."/>
            <person name="Webb E.A."/>
            <person name="Nelson W.C."/>
            <person name="Heidelberg J.F."/>
            <person name="Ivanova N."/>
            <person name="Pati A."/>
            <person name="Edwards K.J."/>
        </authorList>
    </citation>
    <scope>NUCLEOTIDE SEQUENCE [LARGE SCALE GENOMIC DNA]</scope>
    <source>
        <strain>ATCC 700491 / DSM 11845 / VT8</strain>
    </source>
</reference>
<proteinExistence type="inferred from homology"/>